<accession>B8FP23</accession>
<reference key="1">
    <citation type="journal article" date="2012" name="BMC Microbiol.">
        <title>Genome sequence of Desulfitobacterium hafniense DCB-2, a Gram-positive anaerobe capable of dehalogenation and metal reduction.</title>
        <authorList>
            <person name="Kim S.H."/>
            <person name="Harzman C."/>
            <person name="Davis J.K."/>
            <person name="Hutcheson R."/>
            <person name="Broderick J.B."/>
            <person name="Marsh T.L."/>
            <person name="Tiedje J.M."/>
        </authorList>
    </citation>
    <scope>NUCLEOTIDE SEQUENCE [LARGE SCALE GENOMIC DNA]</scope>
    <source>
        <strain>DSM 10664 / DCB-2</strain>
    </source>
</reference>
<sequence length="250" mass="26997">MRMRLFPAIDLKEGKAVRLLQGRMEDATVYGEQPVEVARKFKEQGADSLHVVDLDGAFAGKPVNDAVILKLIQSSGLRVQVGGGIRTLERIEELLKLGVERVILGTVAVRNPELVEKAVQRFEEAVVIGIDAKDGLVAVQGWAEKTEIKALDLALRMKKVGVKHLVFTDISRDGMLQGPNIQSTVELARLSGLQVVASGGVSRLEDLRLLQEEANRGVSLEGAIVGKALYAGAFSLAEALRVVGQRSEGK</sequence>
<proteinExistence type="inferred from homology"/>
<feature type="chain" id="PRO_1000148968" description="1-(5-phosphoribosyl)-5-[(5-phosphoribosylamino)methylideneamino] imidazole-4-carboxamide isomerase">
    <location>
        <begin position="1"/>
        <end position="250"/>
    </location>
</feature>
<feature type="active site" description="Proton acceptor" evidence="1">
    <location>
        <position position="10"/>
    </location>
</feature>
<feature type="active site" description="Proton donor" evidence="1">
    <location>
        <position position="131"/>
    </location>
</feature>
<name>HIS4_DESHD</name>
<keyword id="KW-0028">Amino-acid biosynthesis</keyword>
<keyword id="KW-0963">Cytoplasm</keyword>
<keyword id="KW-0368">Histidine biosynthesis</keyword>
<keyword id="KW-0413">Isomerase</keyword>
<comment type="catalytic activity">
    <reaction evidence="1">
        <text>1-(5-phospho-beta-D-ribosyl)-5-[(5-phospho-beta-D-ribosylamino)methylideneamino]imidazole-4-carboxamide = 5-[(5-phospho-1-deoxy-D-ribulos-1-ylimino)methylamino]-1-(5-phospho-beta-D-ribosyl)imidazole-4-carboxamide</text>
        <dbReference type="Rhea" id="RHEA:15469"/>
        <dbReference type="ChEBI" id="CHEBI:58435"/>
        <dbReference type="ChEBI" id="CHEBI:58525"/>
        <dbReference type="EC" id="5.3.1.16"/>
    </reaction>
</comment>
<comment type="pathway">
    <text evidence="1">Amino-acid biosynthesis; L-histidine biosynthesis; L-histidine from 5-phospho-alpha-D-ribose 1-diphosphate: step 4/9.</text>
</comment>
<comment type="subcellular location">
    <subcellularLocation>
        <location evidence="1">Cytoplasm</location>
    </subcellularLocation>
</comment>
<comment type="similarity">
    <text evidence="1">Belongs to the HisA/HisF family.</text>
</comment>
<dbReference type="EC" id="5.3.1.16" evidence="1"/>
<dbReference type="EMBL" id="CP001336">
    <property type="protein sequence ID" value="ACL19548.1"/>
    <property type="molecule type" value="Genomic_DNA"/>
</dbReference>
<dbReference type="SMR" id="B8FP23"/>
<dbReference type="KEGG" id="dhd:Dhaf_1496"/>
<dbReference type="HOGENOM" id="CLU_048577_1_1_9"/>
<dbReference type="UniPathway" id="UPA00031">
    <property type="reaction ID" value="UER00009"/>
</dbReference>
<dbReference type="Proteomes" id="UP000007726">
    <property type="component" value="Chromosome"/>
</dbReference>
<dbReference type="GO" id="GO:0005737">
    <property type="term" value="C:cytoplasm"/>
    <property type="evidence" value="ECO:0007669"/>
    <property type="project" value="UniProtKB-SubCell"/>
</dbReference>
<dbReference type="GO" id="GO:0003949">
    <property type="term" value="F:1-(5-phosphoribosyl)-5-[(5-phosphoribosylamino)methylideneamino]imidazole-4-carboxamide isomerase activity"/>
    <property type="evidence" value="ECO:0007669"/>
    <property type="project" value="UniProtKB-UniRule"/>
</dbReference>
<dbReference type="GO" id="GO:0000105">
    <property type="term" value="P:L-histidine biosynthetic process"/>
    <property type="evidence" value="ECO:0007669"/>
    <property type="project" value="UniProtKB-UniRule"/>
</dbReference>
<dbReference type="GO" id="GO:0000162">
    <property type="term" value="P:L-tryptophan biosynthetic process"/>
    <property type="evidence" value="ECO:0007669"/>
    <property type="project" value="TreeGrafter"/>
</dbReference>
<dbReference type="CDD" id="cd04732">
    <property type="entry name" value="HisA"/>
    <property type="match status" value="1"/>
</dbReference>
<dbReference type="FunFam" id="3.20.20.70:FF:000009">
    <property type="entry name" value="1-(5-phosphoribosyl)-5-[(5-phosphoribosylamino)methylideneamino] imidazole-4-carboxamide isomerase"/>
    <property type="match status" value="1"/>
</dbReference>
<dbReference type="Gene3D" id="3.20.20.70">
    <property type="entry name" value="Aldolase class I"/>
    <property type="match status" value="1"/>
</dbReference>
<dbReference type="HAMAP" id="MF_01014">
    <property type="entry name" value="HisA"/>
    <property type="match status" value="1"/>
</dbReference>
<dbReference type="InterPro" id="IPR013785">
    <property type="entry name" value="Aldolase_TIM"/>
</dbReference>
<dbReference type="InterPro" id="IPR006062">
    <property type="entry name" value="His_biosynth"/>
</dbReference>
<dbReference type="InterPro" id="IPR006063">
    <property type="entry name" value="HisA_bact_arch"/>
</dbReference>
<dbReference type="InterPro" id="IPR044524">
    <property type="entry name" value="Isoase_HisA-like"/>
</dbReference>
<dbReference type="InterPro" id="IPR023016">
    <property type="entry name" value="Isoase_HisA-like_bact"/>
</dbReference>
<dbReference type="InterPro" id="IPR011060">
    <property type="entry name" value="RibuloseP-bd_barrel"/>
</dbReference>
<dbReference type="NCBIfam" id="TIGR00007">
    <property type="entry name" value="1-(5-phosphoribosyl)-5-[(5-phosphoribosylamino)methylideneamino]imidazole-4-carboxamide isomerase"/>
    <property type="match status" value="1"/>
</dbReference>
<dbReference type="PANTHER" id="PTHR43090">
    <property type="entry name" value="1-(5-PHOSPHORIBOSYL)-5-[(5-PHOSPHORIBOSYLAMINO)METHYLIDENEAMINO] IMIDAZOLE-4-CARBOXAMIDE ISOMERASE"/>
    <property type="match status" value="1"/>
</dbReference>
<dbReference type="PANTHER" id="PTHR43090:SF2">
    <property type="entry name" value="1-(5-PHOSPHORIBOSYL)-5-[(5-PHOSPHORIBOSYLAMINO)METHYLIDENEAMINO] IMIDAZOLE-4-CARBOXAMIDE ISOMERASE"/>
    <property type="match status" value="1"/>
</dbReference>
<dbReference type="Pfam" id="PF00977">
    <property type="entry name" value="His_biosynth"/>
    <property type="match status" value="1"/>
</dbReference>
<dbReference type="SUPFAM" id="SSF51366">
    <property type="entry name" value="Ribulose-phoshate binding barrel"/>
    <property type="match status" value="1"/>
</dbReference>
<evidence type="ECO:0000255" key="1">
    <source>
        <dbReference type="HAMAP-Rule" id="MF_01014"/>
    </source>
</evidence>
<organism>
    <name type="scientific">Desulfitobacterium hafniense (strain DSM 10664 / DCB-2)</name>
    <dbReference type="NCBI Taxonomy" id="272564"/>
    <lineage>
        <taxon>Bacteria</taxon>
        <taxon>Bacillati</taxon>
        <taxon>Bacillota</taxon>
        <taxon>Clostridia</taxon>
        <taxon>Eubacteriales</taxon>
        <taxon>Desulfitobacteriaceae</taxon>
        <taxon>Desulfitobacterium</taxon>
    </lineage>
</organism>
<gene>
    <name evidence="1" type="primary">hisA</name>
    <name type="ordered locus">Dhaf_1496</name>
</gene>
<protein>
    <recommendedName>
        <fullName evidence="1">1-(5-phosphoribosyl)-5-[(5-phosphoribosylamino)methylideneamino] imidazole-4-carboxamide isomerase</fullName>
        <ecNumber evidence="1">5.3.1.16</ecNumber>
    </recommendedName>
    <alternativeName>
        <fullName evidence="1">Phosphoribosylformimino-5-aminoimidazole carboxamide ribotide isomerase</fullName>
    </alternativeName>
</protein>